<evidence type="ECO:0000255" key="1">
    <source>
        <dbReference type="HAMAP-Rule" id="MF_00260"/>
    </source>
</evidence>
<sequence>MSSSALRIGTRASRLALWQAEWVQQQLETLHPGLSVVLVPITTKGDKILDVPLAKVGGKGLFVKEIEEALYDGSIDLAVHSMKDVPSVLPPGLILPCIPPREDPRDALVTPDGRSFAQLPQGARIGTSALRRQAQLLHRRPDLDIVSLRGNVETRLRKMEEEDMDGIVLAAAGLKRLELAERIAEYLSVDVSLPAIGQGALGLECREGDDRTLELIAPLHDADTAVAVRAERAFLRRLNGGCQVPLAAHATVAEQTLTMVGLVAEVDGGSLIKETLAAPVAQAEAVGCQLAETLLARGADRILAALDITPTPLVP</sequence>
<name>HEM3_SYNC1</name>
<gene>
    <name evidence="1" type="primary">hemC</name>
    <name type="ordered locus">Pcar_3063</name>
</gene>
<protein>
    <recommendedName>
        <fullName evidence="1">Porphobilinogen deaminase</fullName>
        <shortName evidence="1">PBG</shortName>
        <ecNumber evidence="1">2.5.1.61</ecNumber>
    </recommendedName>
    <alternativeName>
        <fullName evidence="1">Hydroxymethylbilane synthase</fullName>
        <shortName evidence="1">HMBS</shortName>
    </alternativeName>
    <alternativeName>
        <fullName evidence="1">Pre-uroporphyrinogen synthase</fullName>
    </alternativeName>
</protein>
<proteinExistence type="inferred from homology"/>
<keyword id="KW-0627">Porphyrin biosynthesis</keyword>
<keyword id="KW-1185">Reference proteome</keyword>
<keyword id="KW-0808">Transferase</keyword>
<feature type="chain" id="PRO_0000304255" description="Porphobilinogen deaminase">
    <location>
        <begin position="1"/>
        <end position="315"/>
    </location>
</feature>
<feature type="modified residue" description="S-(dipyrrolylmethanemethyl)cysteine" evidence="1">
    <location>
        <position position="242"/>
    </location>
</feature>
<dbReference type="EC" id="2.5.1.61" evidence="1"/>
<dbReference type="EMBL" id="CP000142">
    <property type="protein sequence ID" value="ABA90298.1"/>
    <property type="molecule type" value="Genomic_DNA"/>
</dbReference>
<dbReference type="RefSeq" id="WP_011342858.1">
    <property type="nucleotide sequence ID" value="NC_007498.2"/>
</dbReference>
<dbReference type="SMR" id="Q3A009"/>
<dbReference type="STRING" id="338963.Pcar_3063"/>
<dbReference type="KEGG" id="pca:Pcar_3063"/>
<dbReference type="eggNOG" id="COG0181">
    <property type="taxonomic scope" value="Bacteria"/>
</dbReference>
<dbReference type="HOGENOM" id="CLU_019704_0_2_7"/>
<dbReference type="OrthoDB" id="9810298at2"/>
<dbReference type="UniPathway" id="UPA00251">
    <property type="reaction ID" value="UER00319"/>
</dbReference>
<dbReference type="Proteomes" id="UP000002534">
    <property type="component" value="Chromosome"/>
</dbReference>
<dbReference type="GO" id="GO:0005737">
    <property type="term" value="C:cytoplasm"/>
    <property type="evidence" value="ECO:0007669"/>
    <property type="project" value="TreeGrafter"/>
</dbReference>
<dbReference type="GO" id="GO:0004418">
    <property type="term" value="F:hydroxymethylbilane synthase activity"/>
    <property type="evidence" value="ECO:0007669"/>
    <property type="project" value="UniProtKB-UniRule"/>
</dbReference>
<dbReference type="GO" id="GO:0006782">
    <property type="term" value="P:protoporphyrinogen IX biosynthetic process"/>
    <property type="evidence" value="ECO:0007669"/>
    <property type="project" value="UniProtKB-UniRule"/>
</dbReference>
<dbReference type="CDD" id="cd13646">
    <property type="entry name" value="PBP2_EcHMBS_like"/>
    <property type="match status" value="1"/>
</dbReference>
<dbReference type="FunFam" id="3.30.160.40:FF:000002">
    <property type="entry name" value="Porphobilinogen deaminase"/>
    <property type="match status" value="1"/>
</dbReference>
<dbReference type="FunFam" id="3.40.190.10:FF:000004">
    <property type="entry name" value="Porphobilinogen deaminase"/>
    <property type="match status" value="1"/>
</dbReference>
<dbReference type="FunFam" id="3.40.190.10:FF:000005">
    <property type="entry name" value="Porphobilinogen deaminase"/>
    <property type="match status" value="1"/>
</dbReference>
<dbReference type="Gene3D" id="3.40.190.10">
    <property type="entry name" value="Periplasmic binding protein-like II"/>
    <property type="match status" value="2"/>
</dbReference>
<dbReference type="Gene3D" id="3.30.160.40">
    <property type="entry name" value="Porphobilinogen deaminase, C-terminal domain"/>
    <property type="match status" value="1"/>
</dbReference>
<dbReference type="HAMAP" id="MF_00260">
    <property type="entry name" value="Porphobil_deam"/>
    <property type="match status" value="1"/>
</dbReference>
<dbReference type="InterPro" id="IPR000860">
    <property type="entry name" value="HemC"/>
</dbReference>
<dbReference type="InterPro" id="IPR022419">
    <property type="entry name" value="Porphobilin_deaminase_cofac_BS"/>
</dbReference>
<dbReference type="InterPro" id="IPR022417">
    <property type="entry name" value="Porphobilin_deaminase_N"/>
</dbReference>
<dbReference type="InterPro" id="IPR022418">
    <property type="entry name" value="Porphobilinogen_deaminase_C"/>
</dbReference>
<dbReference type="InterPro" id="IPR036803">
    <property type="entry name" value="Porphobilinogen_deaminase_C_sf"/>
</dbReference>
<dbReference type="NCBIfam" id="TIGR00212">
    <property type="entry name" value="hemC"/>
    <property type="match status" value="1"/>
</dbReference>
<dbReference type="PANTHER" id="PTHR11557">
    <property type="entry name" value="PORPHOBILINOGEN DEAMINASE"/>
    <property type="match status" value="1"/>
</dbReference>
<dbReference type="PANTHER" id="PTHR11557:SF0">
    <property type="entry name" value="PORPHOBILINOGEN DEAMINASE"/>
    <property type="match status" value="1"/>
</dbReference>
<dbReference type="Pfam" id="PF01379">
    <property type="entry name" value="Porphobil_deam"/>
    <property type="match status" value="1"/>
</dbReference>
<dbReference type="Pfam" id="PF03900">
    <property type="entry name" value="Porphobil_deamC"/>
    <property type="match status" value="1"/>
</dbReference>
<dbReference type="PIRSF" id="PIRSF001438">
    <property type="entry name" value="4pyrrol_synth_OHMeBilane_synth"/>
    <property type="match status" value="1"/>
</dbReference>
<dbReference type="PRINTS" id="PR00151">
    <property type="entry name" value="PORPHBDMNASE"/>
</dbReference>
<dbReference type="SUPFAM" id="SSF53850">
    <property type="entry name" value="Periplasmic binding protein-like II"/>
    <property type="match status" value="1"/>
</dbReference>
<dbReference type="SUPFAM" id="SSF54782">
    <property type="entry name" value="Porphobilinogen deaminase (hydroxymethylbilane synthase), C-terminal domain"/>
    <property type="match status" value="1"/>
</dbReference>
<dbReference type="PROSITE" id="PS00533">
    <property type="entry name" value="PORPHOBILINOGEN_DEAM"/>
    <property type="match status" value="1"/>
</dbReference>
<organism>
    <name type="scientific">Syntrophotalea carbinolica (strain DSM 2380 / NBRC 103641 / GraBd1)</name>
    <name type="common">Pelobacter carbinolicus</name>
    <dbReference type="NCBI Taxonomy" id="338963"/>
    <lineage>
        <taxon>Bacteria</taxon>
        <taxon>Pseudomonadati</taxon>
        <taxon>Thermodesulfobacteriota</taxon>
        <taxon>Desulfuromonadia</taxon>
        <taxon>Desulfuromonadales</taxon>
        <taxon>Syntrophotaleaceae</taxon>
        <taxon>Syntrophotalea</taxon>
    </lineage>
</organism>
<accession>Q3A009</accession>
<reference key="1">
    <citation type="submission" date="2005-10" db="EMBL/GenBank/DDBJ databases">
        <title>Complete sequence of Pelobacter carbinolicus DSM 2380.</title>
        <authorList>
            <person name="Copeland A."/>
            <person name="Lucas S."/>
            <person name="Lapidus A."/>
            <person name="Barry K."/>
            <person name="Detter J.C."/>
            <person name="Glavina T."/>
            <person name="Hammon N."/>
            <person name="Israni S."/>
            <person name="Pitluck S."/>
            <person name="Chertkov O."/>
            <person name="Schmutz J."/>
            <person name="Larimer F."/>
            <person name="Land M."/>
            <person name="Kyrpides N."/>
            <person name="Ivanova N."/>
            <person name="Richardson P."/>
        </authorList>
    </citation>
    <scope>NUCLEOTIDE SEQUENCE [LARGE SCALE GENOMIC DNA]</scope>
    <source>
        <strain>DSM 2380 / NBRC 103641 / GraBd1</strain>
    </source>
</reference>
<comment type="function">
    <text evidence="1">Tetrapolymerization of the monopyrrole PBG into the hydroxymethylbilane pre-uroporphyrinogen in several discrete steps.</text>
</comment>
<comment type="catalytic activity">
    <reaction evidence="1">
        <text>4 porphobilinogen + H2O = hydroxymethylbilane + 4 NH4(+)</text>
        <dbReference type="Rhea" id="RHEA:13185"/>
        <dbReference type="ChEBI" id="CHEBI:15377"/>
        <dbReference type="ChEBI" id="CHEBI:28938"/>
        <dbReference type="ChEBI" id="CHEBI:57845"/>
        <dbReference type="ChEBI" id="CHEBI:58126"/>
        <dbReference type="EC" id="2.5.1.61"/>
    </reaction>
</comment>
<comment type="cofactor">
    <cofactor evidence="1">
        <name>dipyrromethane</name>
        <dbReference type="ChEBI" id="CHEBI:60342"/>
    </cofactor>
    <text evidence="1">Binds 1 dipyrromethane group covalently.</text>
</comment>
<comment type="pathway">
    <text evidence="1">Porphyrin-containing compound metabolism; protoporphyrin-IX biosynthesis; coproporphyrinogen-III from 5-aminolevulinate: step 2/4.</text>
</comment>
<comment type="subunit">
    <text evidence="1">Monomer.</text>
</comment>
<comment type="miscellaneous">
    <text evidence="1">The porphobilinogen subunits are added to the dipyrromethane group.</text>
</comment>
<comment type="similarity">
    <text evidence="1">Belongs to the HMBS family.</text>
</comment>